<dbReference type="EC" id="7.2.2.11" evidence="1"/>
<dbReference type="EMBL" id="CP000038">
    <property type="protein sequence ID" value="AAZ90263.1"/>
    <property type="molecule type" value="Genomic_DNA"/>
</dbReference>
<dbReference type="RefSeq" id="WP_001136223.1">
    <property type="nucleotide sequence ID" value="NC_007384.1"/>
</dbReference>
<dbReference type="SMR" id="Q3YW49"/>
<dbReference type="GeneID" id="93778512"/>
<dbReference type="KEGG" id="ssn:SSON_3717"/>
<dbReference type="HOGENOM" id="CLU_000604_1_23_6"/>
<dbReference type="Proteomes" id="UP000002529">
    <property type="component" value="Chromosome"/>
</dbReference>
<dbReference type="GO" id="GO:0005886">
    <property type="term" value="C:plasma membrane"/>
    <property type="evidence" value="ECO:0007669"/>
    <property type="project" value="UniProtKB-SubCell"/>
</dbReference>
<dbReference type="GO" id="GO:0015413">
    <property type="term" value="F:ABC-type nickel transporter activity"/>
    <property type="evidence" value="ECO:0007669"/>
    <property type="project" value="UniProtKB-EC"/>
</dbReference>
<dbReference type="GO" id="GO:0005524">
    <property type="term" value="F:ATP binding"/>
    <property type="evidence" value="ECO:0007669"/>
    <property type="project" value="UniProtKB-KW"/>
</dbReference>
<dbReference type="GO" id="GO:0016887">
    <property type="term" value="F:ATP hydrolysis activity"/>
    <property type="evidence" value="ECO:0007669"/>
    <property type="project" value="InterPro"/>
</dbReference>
<dbReference type="GO" id="GO:0016151">
    <property type="term" value="F:nickel cation binding"/>
    <property type="evidence" value="ECO:0007669"/>
    <property type="project" value="InterPro"/>
</dbReference>
<dbReference type="CDD" id="cd03257">
    <property type="entry name" value="ABC_NikE_OppD_transporters"/>
    <property type="match status" value="1"/>
</dbReference>
<dbReference type="FunFam" id="3.40.50.300:FF:000858">
    <property type="entry name" value="Nickel import ATP-binding protein NikD"/>
    <property type="match status" value="1"/>
</dbReference>
<dbReference type="Gene3D" id="3.40.50.300">
    <property type="entry name" value="P-loop containing nucleotide triphosphate hydrolases"/>
    <property type="match status" value="1"/>
</dbReference>
<dbReference type="InterPro" id="IPR003593">
    <property type="entry name" value="AAA+_ATPase"/>
</dbReference>
<dbReference type="InterPro" id="IPR050388">
    <property type="entry name" value="ABC_Ni/Peptide_Import"/>
</dbReference>
<dbReference type="InterPro" id="IPR003439">
    <property type="entry name" value="ABC_transporter-like_ATP-bd"/>
</dbReference>
<dbReference type="InterPro" id="IPR017871">
    <property type="entry name" value="ABC_transporter-like_CS"/>
</dbReference>
<dbReference type="InterPro" id="IPR014138">
    <property type="entry name" value="Nickel_NikD"/>
</dbReference>
<dbReference type="InterPro" id="IPR027417">
    <property type="entry name" value="P-loop_NTPase"/>
</dbReference>
<dbReference type="NCBIfam" id="TIGR02770">
    <property type="entry name" value="nickel_nikD"/>
    <property type="match status" value="1"/>
</dbReference>
<dbReference type="PANTHER" id="PTHR43297:SF2">
    <property type="entry name" value="DIPEPTIDE TRANSPORT ATP-BINDING PROTEIN DPPD"/>
    <property type="match status" value="1"/>
</dbReference>
<dbReference type="PANTHER" id="PTHR43297">
    <property type="entry name" value="OLIGOPEPTIDE TRANSPORT ATP-BINDING PROTEIN APPD"/>
    <property type="match status" value="1"/>
</dbReference>
<dbReference type="Pfam" id="PF00005">
    <property type="entry name" value="ABC_tran"/>
    <property type="match status" value="1"/>
</dbReference>
<dbReference type="SMART" id="SM00382">
    <property type="entry name" value="AAA"/>
    <property type="match status" value="1"/>
</dbReference>
<dbReference type="SUPFAM" id="SSF52540">
    <property type="entry name" value="P-loop containing nucleoside triphosphate hydrolases"/>
    <property type="match status" value="1"/>
</dbReference>
<dbReference type="PROSITE" id="PS00211">
    <property type="entry name" value="ABC_TRANSPORTER_1"/>
    <property type="match status" value="1"/>
</dbReference>
<dbReference type="PROSITE" id="PS50893">
    <property type="entry name" value="ABC_TRANSPORTER_2"/>
    <property type="match status" value="1"/>
</dbReference>
<dbReference type="PROSITE" id="PS51247">
    <property type="entry name" value="NIKD"/>
    <property type="match status" value="1"/>
</dbReference>
<accession>Q3YW49</accession>
<reference key="1">
    <citation type="journal article" date="2005" name="Nucleic Acids Res.">
        <title>Genome dynamics and diversity of Shigella species, the etiologic agents of bacillary dysentery.</title>
        <authorList>
            <person name="Yang F."/>
            <person name="Yang J."/>
            <person name="Zhang X."/>
            <person name="Chen L."/>
            <person name="Jiang Y."/>
            <person name="Yan Y."/>
            <person name="Tang X."/>
            <person name="Wang J."/>
            <person name="Xiong Z."/>
            <person name="Dong J."/>
            <person name="Xue Y."/>
            <person name="Zhu Y."/>
            <person name="Xu X."/>
            <person name="Sun L."/>
            <person name="Chen S."/>
            <person name="Nie H."/>
            <person name="Peng J."/>
            <person name="Xu J."/>
            <person name="Wang Y."/>
            <person name="Yuan Z."/>
            <person name="Wen Y."/>
            <person name="Yao Z."/>
            <person name="Shen Y."/>
            <person name="Qiang B."/>
            <person name="Hou Y."/>
            <person name="Yu J."/>
            <person name="Jin Q."/>
        </authorList>
    </citation>
    <scope>NUCLEOTIDE SEQUENCE [LARGE SCALE GENOMIC DNA]</scope>
    <source>
        <strain>Ss046</strain>
    </source>
</reference>
<name>NIKD_SHISS</name>
<gene>
    <name evidence="1" type="primary">nikD</name>
    <name type="ordered locus">SSON_3717</name>
</gene>
<protein>
    <recommendedName>
        <fullName evidence="1">Nickel import ATP-binding protein NikD</fullName>
        <ecNumber evidence="1">7.2.2.11</ecNumber>
    </recommendedName>
</protein>
<sequence>MPQQIELRNIALQAAQPLVHGVSLTLQRGRVLALVGGSGSGKSLTCAATLGILPAGVRQTAGEILADGKAVYPCALRGIKIATIMQNPRSAFNPLHTMHTHARETCLALGKPADDATLTAAIEAVGLENAARVLKLYPFEMSGGMLQRMMIAMAVLCESPFIIADEPTTDLDVVAQARILDLLESIMQKQAPGMLLVTHDMGVVARLADDVAVMSQGKIVEQGDVETLFNAPKHAVTRSLVSAHLALYGMELAS</sequence>
<proteinExistence type="inferred from homology"/>
<keyword id="KW-0067">ATP-binding</keyword>
<keyword id="KW-0997">Cell inner membrane</keyword>
<keyword id="KW-1003">Cell membrane</keyword>
<keyword id="KW-0406">Ion transport</keyword>
<keyword id="KW-0472">Membrane</keyword>
<keyword id="KW-0533">Nickel</keyword>
<keyword id="KW-0921">Nickel transport</keyword>
<keyword id="KW-0547">Nucleotide-binding</keyword>
<keyword id="KW-1185">Reference proteome</keyword>
<keyword id="KW-1278">Translocase</keyword>
<keyword id="KW-0813">Transport</keyword>
<comment type="function">
    <text evidence="1">Part of the ABC transporter complex NikABCDE involved in nickel import. Responsible for energy coupling to the transport system.</text>
</comment>
<comment type="catalytic activity">
    <reaction evidence="1">
        <text>Ni(2+)(out) + ATP + H2O = Ni(2+)(in) + ADP + phosphate + H(+)</text>
        <dbReference type="Rhea" id="RHEA:15557"/>
        <dbReference type="ChEBI" id="CHEBI:15377"/>
        <dbReference type="ChEBI" id="CHEBI:15378"/>
        <dbReference type="ChEBI" id="CHEBI:30616"/>
        <dbReference type="ChEBI" id="CHEBI:43474"/>
        <dbReference type="ChEBI" id="CHEBI:49786"/>
        <dbReference type="ChEBI" id="CHEBI:456216"/>
        <dbReference type="EC" id="7.2.2.11"/>
    </reaction>
</comment>
<comment type="subunit">
    <text evidence="1">The complex is composed of two ATP-binding proteins (NikD and NikE), two transmembrane proteins (NikB and NikC) and a solute-binding protein (NikA).</text>
</comment>
<comment type="subcellular location">
    <subcellularLocation>
        <location evidence="1">Cell inner membrane</location>
        <topology evidence="1">Peripheral membrane protein</topology>
    </subcellularLocation>
</comment>
<comment type="similarity">
    <text evidence="1">Belongs to the ABC transporter superfamily. Nickel importer (TC 3.A.1.5.3) family.</text>
</comment>
<organism>
    <name type="scientific">Shigella sonnei (strain Ss046)</name>
    <dbReference type="NCBI Taxonomy" id="300269"/>
    <lineage>
        <taxon>Bacteria</taxon>
        <taxon>Pseudomonadati</taxon>
        <taxon>Pseudomonadota</taxon>
        <taxon>Gammaproteobacteria</taxon>
        <taxon>Enterobacterales</taxon>
        <taxon>Enterobacteriaceae</taxon>
        <taxon>Shigella</taxon>
    </lineage>
</organism>
<feature type="chain" id="PRO_0000274119" description="Nickel import ATP-binding protein NikD">
    <location>
        <begin position="1"/>
        <end position="254"/>
    </location>
</feature>
<feature type="domain" description="ABC transporter" evidence="1">
    <location>
        <begin position="2"/>
        <end position="241"/>
    </location>
</feature>
<feature type="binding site" evidence="1">
    <location>
        <begin position="36"/>
        <end position="43"/>
    </location>
    <ligand>
        <name>ATP</name>
        <dbReference type="ChEBI" id="CHEBI:30616"/>
    </ligand>
</feature>
<evidence type="ECO:0000255" key="1">
    <source>
        <dbReference type="HAMAP-Rule" id="MF_01711"/>
    </source>
</evidence>